<name>MEF2B_HUMAN</name>
<gene>
    <name type="primary">MEF2B</name>
    <name type="synonym">XMEF2</name>
</gene>
<proteinExistence type="evidence at protein level"/>
<organism>
    <name type="scientific">Homo sapiens</name>
    <name type="common">Human</name>
    <dbReference type="NCBI Taxonomy" id="9606"/>
    <lineage>
        <taxon>Eukaryota</taxon>
        <taxon>Metazoa</taxon>
        <taxon>Chordata</taxon>
        <taxon>Craniata</taxon>
        <taxon>Vertebrata</taxon>
        <taxon>Euteleostomi</taxon>
        <taxon>Mammalia</taxon>
        <taxon>Eutheria</taxon>
        <taxon>Euarchontoglires</taxon>
        <taxon>Primates</taxon>
        <taxon>Haplorrhini</taxon>
        <taxon>Catarrhini</taxon>
        <taxon>Hominidae</taxon>
        <taxon>Homo</taxon>
    </lineage>
</organism>
<dbReference type="EMBL" id="X68502">
    <property type="protein sequence ID" value="CAA48515.1"/>
    <property type="molecule type" value="mRNA"/>
</dbReference>
<dbReference type="EMBL" id="X63380">
    <property type="protein sequence ID" value="CAA44978.1"/>
    <property type="molecule type" value="mRNA"/>
</dbReference>
<dbReference type="EMBL" id="AK301086">
    <property type="protein sequence ID" value="BAG62689.1"/>
    <property type="molecule type" value="mRNA"/>
</dbReference>
<dbReference type="EMBL" id="AK316328">
    <property type="protein sequence ID" value="BAH14699.1"/>
    <property type="molecule type" value="mRNA"/>
</dbReference>
<dbReference type="EMBL" id="AC002126">
    <property type="protein sequence ID" value="AAB86982.1"/>
    <property type="molecule type" value="Genomic_DNA"/>
</dbReference>
<dbReference type="EMBL" id="CH471106">
    <property type="protein sequence ID" value="EAW84788.1"/>
    <property type="molecule type" value="Genomic_DNA"/>
</dbReference>
<dbReference type="EMBL" id="BC126245">
    <property type="protein sequence ID" value="AAI26246.1"/>
    <property type="molecule type" value="mRNA"/>
</dbReference>
<dbReference type="EMBL" id="BC136457">
    <property type="protein sequence ID" value="AAI36458.1"/>
    <property type="molecule type" value="mRNA"/>
</dbReference>
<dbReference type="EMBL" id="BC171767">
    <property type="protein sequence ID" value="AAI71767.1"/>
    <property type="molecule type" value="mRNA"/>
</dbReference>
<dbReference type="CCDS" id="CCDS46024.1">
    <molecule id="Q02080-2"/>
</dbReference>
<dbReference type="PIR" id="A39481">
    <property type="entry name" value="A39481"/>
</dbReference>
<dbReference type="RefSeq" id="NP_001139257.1">
    <molecule id="Q02080-2"/>
    <property type="nucleotide sequence ID" value="NM_001145785.2"/>
</dbReference>
<dbReference type="RefSeq" id="NP_001354211.1">
    <molecule id="Q02080-1"/>
    <property type="nucleotide sequence ID" value="NM_001367282.1"/>
</dbReference>
<dbReference type="RefSeq" id="NP_005910.1">
    <molecule id="Q02080-1"/>
    <property type="nucleotide sequence ID" value="NM_005919.3"/>
</dbReference>
<dbReference type="PDB" id="1N6J">
    <property type="method" value="X-ray"/>
    <property type="resolution" value="2.20 A"/>
    <property type="chains" value="A/B=2-94"/>
</dbReference>
<dbReference type="PDB" id="1TQE">
    <property type="method" value="X-ray"/>
    <property type="resolution" value="2.70 A"/>
    <property type="chains" value="P/Q/R/S=1-93"/>
</dbReference>
<dbReference type="PDB" id="6BYY">
    <property type="method" value="X-ray"/>
    <property type="resolution" value="2.30 A"/>
    <property type="chains" value="A/B/C/D=63-91"/>
</dbReference>
<dbReference type="PDB" id="6BZ1">
    <property type="method" value="X-ray"/>
    <property type="resolution" value="2.97 A"/>
    <property type="chains" value="A/B/C/D=65-91"/>
</dbReference>
<dbReference type="PDB" id="6C9L">
    <property type="method" value="X-ray"/>
    <property type="resolution" value="2.30 A"/>
    <property type="chains" value="A/B/C/D/E/F=1-93"/>
</dbReference>
<dbReference type="PDB" id="6WC2">
    <property type="method" value="X-ray"/>
    <property type="resolution" value="2.10 A"/>
    <property type="chains" value="A/B/C/D/I/J=1-8, A/B/C/D/I/J=73-91"/>
</dbReference>
<dbReference type="PDB" id="6WC5">
    <property type="method" value="X-ray"/>
    <property type="resolution" value="2.90 A"/>
    <property type="chains" value="A/B/C/D=2-91"/>
</dbReference>
<dbReference type="PDBsum" id="1N6J"/>
<dbReference type="PDBsum" id="1TQE"/>
<dbReference type="PDBsum" id="6BYY"/>
<dbReference type="PDBsum" id="6BZ1"/>
<dbReference type="PDBsum" id="6C9L"/>
<dbReference type="PDBsum" id="6WC2"/>
<dbReference type="PDBsum" id="6WC5"/>
<dbReference type="SMR" id="Q02080"/>
<dbReference type="BioGRID" id="110371">
    <property type="interactions" value="21"/>
</dbReference>
<dbReference type="BioGRID" id="938509">
    <property type="interactions" value="8"/>
</dbReference>
<dbReference type="FunCoup" id="Q02080">
    <property type="interactions" value="551"/>
</dbReference>
<dbReference type="IntAct" id="Q02080">
    <property type="interactions" value="8"/>
</dbReference>
<dbReference type="STRING" id="9606.ENSP00000402154"/>
<dbReference type="GlyGen" id="Q02080">
    <property type="glycosylation" value="3 sites, 1 O-linked glycan (1 site)"/>
</dbReference>
<dbReference type="iPTMnet" id="Q02080"/>
<dbReference type="PhosphoSitePlus" id="Q02080"/>
<dbReference type="BioMuta" id="MEF2B"/>
<dbReference type="DMDM" id="1346514"/>
<dbReference type="MassIVE" id="Q02080"/>
<dbReference type="PaxDb" id="9606-ENSP00000390762"/>
<dbReference type="PeptideAtlas" id="Q02080"/>
<dbReference type="ProteomicsDB" id="58042">
    <molecule id="Q02080-1"/>
</dbReference>
<dbReference type="ProteomicsDB" id="58043">
    <molecule id="Q02080-2"/>
</dbReference>
<dbReference type="Antibodypedia" id="47983">
    <property type="antibodies" value="173 antibodies from 22 providers"/>
</dbReference>
<dbReference type="DNASU" id="4207"/>
<dbReference type="Ensembl" id="ENST00000424583.7">
    <molecule id="Q02080-2"/>
    <property type="protein sequence ID" value="ENSP00000402154.2"/>
    <property type="gene ID" value="ENSG00000213999.17"/>
</dbReference>
<dbReference type="Ensembl" id="ENST00000444486.7">
    <molecule id="Q02080-1"/>
    <property type="protein sequence ID" value="ENSP00000390762.2"/>
    <property type="gene ID" value="ENSG00000213999.17"/>
</dbReference>
<dbReference type="GeneID" id="100271849"/>
<dbReference type="GeneID" id="4207"/>
<dbReference type="KEGG" id="hsa:100271849"/>
<dbReference type="KEGG" id="hsa:4207"/>
<dbReference type="MANE-Select" id="ENST00000424583.7">
    <molecule id="Q02080-2"/>
    <property type="protein sequence ID" value="ENSP00000402154.2"/>
    <property type="RefSeq nucleotide sequence ID" value="NM_001145785.2"/>
    <property type="RefSeq protein sequence ID" value="NP_001139257.1"/>
</dbReference>
<dbReference type="UCSC" id="uc002nll.3">
    <molecule id="Q02080-1"/>
    <property type="organism name" value="human"/>
</dbReference>
<dbReference type="AGR" id="HGNC:39979"/>
<dbReference type="AGR" id="HGNC:6995"/>
<dbReference type="CTD" id="100271849"/>
<dbReference type="CTD" id="4207"/>
<dbReference type="DisGeNET" id="100271849"/>
<dbReference type="DisGeNET" id="4207"/>
<dbReference type="GeneCards" id="MEF2B"/>
<dbReference type="HGNC" id="HGNC:6995">
    <property type="gene designation" value="MEF2B"/>
</dbReference>
<dbReference type="HPA" id="ENSG00000213999">
    <property type="expression patterns" value="Tissue enriched (lymphoid)"/>
</dbReference>
<dbReference type="MalaCards" id="MEF2B"/>
<dbReference type="MIM" id="600661">
    <property type="type" value="gene"/>
</dbReference>
<dbReference type="neXtProt" id="NX_Q02080"/>
<dbReference type="OpenTargets" id="ENSG00000213999"/>
<dbReference type="VEuPathDB" id="HostDB:ENSG00000213999"/>
<dbReference type="eggNOG" id="KOG0014">
    <property type="taxonomic scope" value="Eukaryota"/>
</dbReference>
<dbReference type="GeneTree" id="ENSGT00940000160699"/>
<dbReference type="InParanoid" id="Q02080"/>
<dbReference type="OrthoDB" id="1898716at2759"/>
<dbReference type="PAN-GO" id="Q02080">
    <property type="GO annotations" value="4 GO annotations based on evolutionary models"/>
</dbReference>
<dbReference type="PhylomeDB" id="Q02080"/>
<dbReference type="TreeFam" id="TF314067"/>
<dbReference type="PathwayCommons" id="Q02080"/>
<dbReference type="Reactome" id="R-HSA-525793">
    <property type="pathway name" value="Myogenesis"/>
</dbReference>
<dbReference type="SignaLink" id="Q02080"/>
<dbReference type="BioGRID-ORCS" id="100271849">
    <property type="hits" value="24 hits in 784 CRISPR screens"/>
</dbReference>
<dbReference type="BioGRID-ORCS" id="4207">
    <property type="hits" value="15 hits in 637 CRISPR screens"/>
</dbReference>
<dbReference type="EvolutionaryTrace" id="Q02080"/>
<dbReference type="GeneWiki" id="MEF2B"/>
<dbReference type="Pharos" id="Q02080">
    <property type="development level" value="Tbio"/>
</dbReference>
<dbReference type="PRO" id="PR:Q02080"/>
<dbReference type="Proteomes" id="UP000005640">
    <property type="component" value="Chromosome 19"/>
</dbReference>
<dbReference type="RNAct" id="Q02080">
    <property type="molecule type" value="protein"/>
</dbReference>
<dbReference type="Bgee" id="ENSG00000213999">
    <property type="expression patterns" value="Expressed in primordial germ cell in gonad and 91 other cell types or tissues"/>
</dbReference>
<dbReference type="ExpressionAtlas" id="Q02080">
    <property type="expression patterns" value="baseline and differential"/>
</dbReference>
<dbReference type="GO" id="GO:0030054">
    <property type="term" value="C:cell junction"/>
    <property type="evidence" value="ECO:0000314"/>
    <property type="project" value="HPA"/>
</dbReference>
<dbReference type="GO" id="GO:0000785">
    <property type="term" value="C:chromatin"/>
    <property type="evidence" value="ECO:0000247"/>
    <property type="project" value="NTNU_SB"/>
</dbReference>
<dbReference type="GO" id="GO:0005829">
    <property type="term" value="C:cytosol"/>
    <property type="evidence" value="ECO:0000314"/>
    <property type="project" value="HPA"/>
</dbReference>
<dbReference type="GO" id="GO:0005654">
    <property type="term" value="C:nucleoplasm"/>
    <property type="evidence" value="ECO:0000314"/>
    <property type="project" value="HPA"/>
</dbReference>
<dbReference type="GO" id="GO:0005634">
    <property type="term" value="C:nucleus"/>
    <property type="evidence" value="ECO:0000304"/>
    <property type="project" value="ProtInc"/>
</dbReference>
<dbReference type="GO" id="GO:0005667">
    <property type="term" value="C:transcription regulator complex"/>
    <property type="evidence" value="ECO:0000314"/>
    <property type="project" value="BHF-UCL"/>
</dbReference>
<dbReference type="GO" id="GO:0001228">
    <property type="term" value="F:DNA-binding transcription activator activity, RNA polymerase II-specific"/>
    <property type="evidence" value="ECO:0000314"/>
    <property type="project" value="NTNU_SB"/>
</dbReference>
<dbReference type="GO" id="GO:0003700">
    <property type="term" value="F:DNA-binding transcription factor activity"/>
    <property type="evidence" value="ECO:0000303"/>
    <property type="project" value="ProtInc"/>
</dbReference>
<dbReference type="GO" id="GO:0000981">
    <property type="term" value="F:DNA-binding transcription factor activity, RNA polymerase II-specific"/>
    <property type="evidence" value="ECO:0000247"/>
    <property type="project" value="NTNU_SB"/>
</dbReference>
<dbReference type="GO" id="GO:0042826">
    <property type="term" value="F:histone deacetylase binding"/>
    <property type="evidence" value="ECO:0000353"/>
    <property type="project" value="BHF-UCL"/>
</dbReference>
<dbReference type="GO" id="GO:0046983">
    <property type="term" value="F:protein dimerization activity"/>
    <property type="evidence" value="ECO:0007669"/>
    <property type="project" value="InterPro"/>
</dbReference>
<dbReference type="GO" id="GO:0000978">
    <property type="term" value="F:RNA polymerase II cis-regulatory region sequence-specific DNA binding"/>
    <property type="evidence" value="ECO:0000314"/>
    <property type="project" value="NTNU_SB"/>
</dbReference>
<dbReference type="GO" id="GO:1990837">
    <property type="term" value="F:sequence-specific double-stranded DNA binding"/>
    <property type="evidence" value="ECO:0000314"/>
    <property type="project" value="ARUK-UCL"/>
</dbReference>
<dbReference type="GO" id="GO:0030154">
    <property type="term" value="P:cell differentiation"/>
    <property type="evidence" value="ECO:0000318"/>
    <property type="project" value="GO_Central"/>
</dbReference>
<dbReference type="GO" id="GO:0007507">
    <property type="term" value="P:heart development"/>
    <property type="evidence" value="ECO:0000318"/>
    <property type="project" value="GO_Central"/>
</dbReference>
<dbReference type="GO" id="GO:0007517">
    <property type="term" value="P:muscle organ development"/>
    <property type="evidence" value="ECO:0000304"/>
    <property type="project" value="ProtInc"/>
</dbReference>
<dbReference type="GO" id="GO:0045944">
    <property type="term" value="P:positive regulation of transcription by RNA polymerase II"/>
    <property type="evidence" value="ECO:0000314"/>
    <property type="project" value="NTNU_SB"/>
</dbReference>
<dbReference type="CDD" id="cd00265">
    <property type="entry name" value="MADS_MEF2_like"/>
    <property type="match status" value="1"/>
</dbReference>
<dbReference type="FunFam" id="3.40.1810.10:FF:000001">
    <property type="entry name" value="Myocyte-specific enhancer factor 2A homolog"/>
    <property type="match status" value="1"/>
</dbReference>
<dbReference type="Gene3D" id="3.40.1810.10">
    <property type="entry name" value="Transcription factor, MADS-box"/>
    <property type="match status" value="1"/>
</dbReference>
<dbReference type="InterPro" id="IPR033896">
    <property type="entry name" value="MEF2-like_N"/>
</dbReference>
<dbReference type="InterPro" id="IPR002100">
    <property type="entry name" value="TF_MADSbox"/>
</dbReference>
<dbReference type="InterPro" id="IPR036879">
    <property type="entry name" value="TF_MADSbox_sf"/>
</dbReference>
<dbReference type="PANTHER" id="PTHR11945">
    <property type="entry name" value="MADS BOX PROTEIN"/>
    <property type="match status" value="1"/>
</dbReference>
<dbReference type="PANTHER" id="PTHR11945:SF383">
    <property type="entry name" value="MYOCYTE-SPECIFIC ENHANCER FACTOR 2B"/>
    <property type="match status" value="1"/>
</dbReference>
<dbReference type="Pfam" id="PF00319">
    <property type="entry name" value="SRF-TF"/>
    <property type="match status" value="1"/>
</dbReference>
<dbReference type="PRINTS" id="PR00404">
    <property type="entry name" value="MADSDOMAIN"/>
</dbReference>
<dbReference type="SMART" id="SM00432">
    <property type="entry name" value="MADS"/>
    <property type="match status" value="1"/>
</dbReference>
<dbReference type="SUPFAM" id="SSF55455">
    <property type="entry name" value="SRF-like"/>
    <property type="match status" value="1"/>
</dbReference>
<dbReference type="PROSITE" id="PS00350">
    <property type="entry name" value="MADS_BOX_1"/>
    <property type="match status" value="1"/>
</dbReference>
<dbReference type="PROSITE" id="PS50066">
    <property type="entry name" value="MADS_BOX_2"/>
    <property type="match status" value="1"/>
</dbReference>
<accession>Q02080</accession>
<accession>A0AV80</accession>
<accession>B4DVH7</accession>
<accession>B7ZVY1</accession>
<accession>G5E9M1</accession>
<evidence type="ECO:0000250" key="1"/>
<evidence type="ECO:0000255" key="2"/>
<evidence type="ECO:0000255" key="3">
    <source>
        <dbReference type="PROSITE-ProRule" id="PRU00251"/>
    </source>
</evidence>
<evidence type="ECO:0000256" key="4">
    <source>
        <dbReference type="SAM" id="MobiDB-lite"/>
    </source>
</evidence>
<evidence type="ECO:0000269" key="5">
    <source>
    </source>
</evidence>
<evidence type="ECO:0000303" key="6">
    <source>
    </source>
</evidence>
<evidence type="ECO:0000305" key="7"/>
<evidence type="ECO:0007829" key="8">
    <source>
        <dbReference type="PDB" id="1N6J"/>
    </source>
</evidence>
<evidence type="ECO:0007829" key="9">
    <source>
        <dbReference type="PDB" id="6WC2"/>
    </source>
</evidence>
<reference key="1">
    <citation type="journal article" date="1992" name="Genes Dev.">
        <title>Human myocyte-specific enhancer factor 2 comprises a group of tissue-restricted MADS box transcription factors.</title>
        <authorList>
            <person name="Yu Y.-T."/>
            <person name="Breitbart R.E."/>
            <person name="Smoot L.B."/>
            <person name="Lee Y."/>
            <person name="Mahdavi V."/>
            <person name="Nadal-Ginard B."/>
        </authorList>
    </citation>
    <scope>NUCLEOTIDE SEQUENCE [MRNA] (ISOFORM 1)</scope>
    <source>
        <tissue>Heart</tissue>
        <tissue>Skeletal muscle</tissue>
    </source>
</reference>
<reference key="2">
    <citation type="journal article" date="1991" name="Genes Dev.">
        <title>Human SRF-related proteins: DNA-binding properties and potential regulatory targets.</title>
        <authorList>
            <person name="Pollock R."/>
            <person name="Treisman R."/>
        </authorList>
    </citation>
    <scope>NUCLEOTIDE SEQUENCE [MRNA] (ISOFORM 1)</scope>
    <source>
        <tissue>Placenta</tissue>
    </source>
</reference>
<reference key="3">
    <citation type="journal article" date="2004" name="Nat. Genet.">
        <title>Complete sequencing and characterization of 21,243 full-length human cDNAs.</title>
        <authorList>
            <person name="Ota T."/>
            <person name="Suzuki Y."/>
            <person name="Nishikawa T."/>
            <person name="Otsuki T."/>
            <person name="Sugiyama T."/>
            <person name="Irie R."/>
            <person name="Wakamatsu A."/>
            <person name="Hayashi K."/>
            <person name="Sato H."/>
            <person name="Nagai K."/>
            <person name="Kimura K."/>
            <person name="Makita H."/>
            <person name="Sekine M."/>
            <person name="Obayashi M."/>
            <person name="Nishi T."/>
            <person name="Shibahara T."/>
            <person name="Tanaka T."/>
            <person name="Ishii S."/>
            <person name="Yamamoto J."/>
            <person name="Saito K."/>
            <person name="Kawai Y."/>
            <person name="Isono Y."/>
            <person name="Nakamura Y."/>
            <person name="Nagahari K."/>
            <person name="Murakami K."/>
            <person name="Yasuda T."/>
            <person name="Iwayanagi T."/>
            <person name="Wagatsuma M."/>
            <person name="Shiratori A."/>
            <person name="Sudo H."/>
            <person name="Hosoiri T."/>
            <person name="Kaku Y."/>
            <person name="Kodaira H."/>
            <person name="Kondo H."/>
            <person name="Sugawara M."/>
            <person name="Takahashi M."/>
            <person name="Kanda K."/>
            <person name="Yokoi T."/>
            <person name="Furuya T."/>
            <person name="Kikkawa E."/>
            <person name="Omura Y."/>
            <person name="Abe K."/>
            <person name="Kamihara K."/>
            <person name="Katsuta N."/>
            <person name="Sato K."/>
            <person name="Tanikawa M."/>
            <person name="Yamazaki M."/>
            <person name="Ninomiya K."/>
            <person name="Ishibashi T."/>
            <person name="Yamashita H."/>
            <person name="Murakawa K."/>
            <person name="Fujimori K."/>
            <person name="Tanai H."/>
            <person name="Kimata M."/>
            <person name="Watanabe M."/>
            <person name="Hiraoka S."/>
            <person name="Chiba Y."/>
            <person name="Ishida S."/>
            <person name="Ono Y."/>
            <person name="Takiguchi S."/>
            <person name="Watanabe S."/>
            <person name="Yosida M."/>
            <person name="Hotuta T."/>
            <person name="Kusano J."/>
            <person name="Kanehori K."/>
            <person name="Takahashi-Fujii A."/>
            <person name="Hara H."/>
            <person name="Tanase T.-O."/>
            <person name="Nomura Y."/>
            <person name="Togiya S."/>
            <person name="Komai F."/>
            <person name="Hara R."/>
            <person name="Takeuchi K."/>
            <person name="Arita M."/>
            <person name="Imose N."/>
            <person name="Musashino K."/>
            <person name="Yuuki H."/>
            <person name="Oshima A."/>
            <person name="Sasaki N."/>
            <person name="Aotsuka S."/>
            <person name="Yoshikawa Y."/>
            <person name="Matsunawa H."/>
            <person name="Ichihara T."/>
            <person name="Shiohata N."/>
            <person name="Sano S."/>
            <person name="Moriya S."/>
            <person name="Momiyama H."/>
            <person name="Satoh N."/>
            <person name="Takami S."/>
            <person name="Terashima Y."/>
            <person name="Suzuki O."/>
            <person name="Nakagawa S."/>
            <person name="Senoh A."/>
            <person name="Mizoguchi H."/>
            <person name="Goto Y."/>
            <person name="Shimizu F."/>
            <person name="Wakebe H."/>
            <person name="Hishigaki H."/>
            <person name="Watanabe T."/>
            <person name="Sugiyama A."/>
            <person name="Takemoto M."/>
            <person name="Kawakami B."/>
            <person name="Yamazaki M."/>
            <person name="Watanabe K."/>
            <person name="Kumagai A."/>
            <person name="Itakura S."/>
            <person name="Fukuzumi Y."/>
            <person name="Fujimori Y."/>
            <person name="Komiyama M."/>
            <person name="Tashiro H."/>
            <person name="Tanigami A."/>
            <person name="Fujiwara T."/>
            <person name="Ono T."/>
            <person name="Yamada K."/>
            <person name="Fujii Y."/>
            <person name="Ozaki K."/>
            <person name="Hirao M."/>
            <person name="Ohmori Y."/>
            <person name="Kawabata A."/>
            <person name="Hikiji T."/>
            <person name="Kobatake N."/>
            <person name="Inagaki H."/>
            <person name="Ikema Y."/>
            <person name="Okamoto S."/>
            <person name="Okitani R."/>
            <person name="Kawakami T."/>
            <person name="Noguchi S."/>
            <person name="Itoh T."/>
            <person name="Shigeta K."/>
            <person name="Senba T."/>
            <person name="Matsumura K."/>
            <person name="Nakajima Y."/>
            <person name="Mizuno T."/>
            <person name="Morinaga M."/>
            <person name="Sasaki M."/>
            <person name="Togashi T."/>
            <person name="Oyama M."/>
            <person name="Hata H."/>
            <person name="Watanabe M."/>
            <person name="Komatsu T."/>
            <person name="Mizushima-Sugano J."/>
            <person name="Satoh T."/>
            <person name="Shirai Y."/>
            <person name="Takahashi Y."/>
            <person name="Nakagawa K."/>
            <person name="Okumura K."/>
            <person name="Nagase T."/>
            <person name="Nomura N."/>
            <person name="Kikuchi H."/>
            <person name="Masuho Y."/>
            <person name="Yamashita R."/>
            <person name="Nakai K."/>
            <person name="Yada T."/>
            <person name="Nakamura Y."/>
            <person name="Ohara O."/>
            <person name="Isogai T."/>
            <person name="Sugano S."/>
        </authorList>
    </citation>
    <scope>NUCLEOTIDE SEQUENCE [LARGE SCALE MRNA] (ISOFORM 2)</scope>
    <source>
        <tissue>Spleen</tissue>
    </source>
</reference>
<reference key="4">
    <citation type="journal article" date="2004" name="Nature">
        <title>The DNA sequence and biology of human chromosome 19.</title>
        <authorList>
            <person name="Grimwood J."/>
            <person name="Gordon L.A."/>
            <person name="Olsen A.S."/>
            <person name="Terry A."/>
            <person name="Schmutz J."/>
            <person name="Lamerdin J.E."/>
            <person name="Hellsten U."/>
            <person name="Goodstein D."/>
            <person name="Couronne O."/>
            <person name="Tran-Gyamfi M."/>
            <person name="Aerts A."/>
            <person name="Altherr M."/>
            <person name="Ashworth L."/>
            <person name="Bajorek E."/>
            <person name="Black S."/>
            <person name="Branscomb E."/>
            <person name="Caenepeel S."/>
            <person name="Carrano A.V."/>
            <person name="Caoile C."/>
            <person name="Chan Y.M."/>
            <person name="Christensen M."/>
            <person name="Cleland C.A."/>
            <person name="Copeland A."/>
            <person name="Dalin E."/>
            <person name="Dehal P."/>
            <person name="Denys M."/>
            <person name="Detter J.C."/>
            <person name="Escobar J."/>
            <person name="Flowers D."/>
            <person name="Fotopulos D."/>
            <person name="Garcia C."/>
            <person name="Georgescu A.M."/>
            <person name="Glavina T."/>
            <person name="Gomez M."/>
            <person name="Gonzales E."/>
            <person name="Groza M."/>
            <person name="Hammon N."/>
            <person name="Hawkins T."/>
            <person name="Haydu L."/>
            <person name="Ho I."/>
            <person name="Huang W."/>
            <person name="Israni S."/>
            <person name="Jett J."/>
            <person name="Kadner K."/>
            <person name="Kimball H."/>
            <person name="Kobayashi A."/>
            <person name="Larionov V."/>
            <person name="Leem S.-H."/>
            <person name="Lopez F."/>
            <person name="Lou Y."/>
            <person name="Lowry S."/>
            <person name="Malfatti S."/>
            <person name="Martinez D."/>
            <person name="McCready P.M."/>
            <person name="Medina C."/>
            <person name="Morgan J."/>
            <person name="Nelson K."/>
            <person name="Nolan M."/>
            <person name="Ovcharenko I."/>
            <person name="Pitluck S."/>
            <person name="Pollard M."/>
            <person name="Popkie A.P."/>
            <person name="Predki P."/>
            <person name="Quan G."/>
            <person name="Ramirez L."/>
            <person name="Rash S."/>
            <person name="Retterer J."/>
            <person name="Rodriguez A."/>
            <person name="Rogers S."/>
            <person name="Salamov A."/>
            <person name="Salazar A."/>
            <person name="She X."/>
            <person name="Smith D."/>
            <person name="Slezak T."/>
            <person name="Solovyev V."/>
            <person name="Thayer N."/>
            <person name="Tice H."/>
            <person name="Tsai M."/>
            <person name="Ustaszewska A."/>
            <person name="Vo N."/>
            <person name="Wagner M."/>
            <person name="Wheeler J."/>
            <person name="Wu K."/>
            <person name="Xie G."/>
            <person name="Yang J."/>
            <person name="Dubchak I."/>
            <person name="Furey T.S."/>
            <person name="DeJong P."/>
            <person name="Dickson M."/>
            <person name="Gordon D."/>
            <person name="Eichler E.E."/>
            <person name="Pennacchio L.A."/>
            <person name="Richardson P."/>
            <person name="Stubbs L."/>
            <person name="Rokhsar D.S."/>
            <person name="Myers R.M."/>
            <person name="Rubin E.M."/>
            <person name="Lucas S.M."/>
        </authorList>
    </citation>
    <scope>NUCLEOTIDE SEQUENCE [LARGE SCALE GENOMIC DNA]</scope>
</reference>
<reference key="5">
    <citation type="submission" date="2005-07" db="EMBL/GenBank/DDBJ databases">
        <authorList>
            <person name="Mural R.J."/>
            <person name="Istrail S."/>
            <person name="Sutton G."/>
            <person name="Florea L."/>
            <person name="Halpern A.L."/>
            <person name="Mobarry C.M."/>
            <person name="Lippert R."/>
            <person name="Walenz B."/>
            <person name="Shatkay H."/>
            <person name="Dew I."/>
            <person name="Miller J.R."/>
            <person name="Flanigan M.J."/>
            <person name="Edwards N.J."/>
            <person name="Bolanos R."/>
            <person name="Fasulo D."/>
            <person name="Halldorsson B.V."/>
            <person name="Hannenhalli S."/>
            <person name="Turner R."/>
            <person name="Yooseph S."/>
            <person name="Lu F."/>
            <person name="Nusskern D.R."/>
            <person name="Shue B.C."/>
            <person name="Zheng X.H."/>
            <person name="Zhong F."/>
            <person name="Delcher A.L."/>
            <person name="Huson D.H."/>
            <person name="Kravitz S.A."/>
            <person name="Mouchard L."/>
            <person name="Reinert K."/>
            <person name="Remington K.A."/>
            <person name="Clark A.G."/>
            <person name="Waterman M.S."/>
            <person name="Eichler E.E."/>
            <person name="Adams M.D."/>
            <person name="Hunkapiller M.W."/>
            <person name="Myers E.W."/>
            <person name="Venter J.C."/>
        </authorList>
    </citation>
    <scope>NUCLEOTIDE SEQUENCE [LARGE SCALE GENOMIC DNA]</scope>
</reference>
<reference key="6">
    <citation type="journal article" date="2004" name="Genome Res.">
        <title>The status, quality, and expansion of the NIH full-length cDNA project: the Mammalian Gene Collection (MGC).</title>
        <authorList>
            <consortium name="The MGC Project Team"/>
        </authorList>
    </citation>
    <scope>NUCLEOTIDE SEQUENCE [LARGE SCALE MRNA] (ISOFORM 1)</scope>
    <source>
        <tissue>Brain</tissue>
        <tissue>Testis</tissue>
    </source>
</reference>
<reference key="7">
    <citation type="journal article" date="2003" name="Nature">
        <title>Sequence-specific recruitment of transcriptional co-repressor Cabin1 by myocyte enhancer factor-2.</title>
        <authorList>
            <person name="Han A."/>
            <person name="Pan F."/>
            <person name="Stroud J.C."/>
            <person name="Youn H.-D."/>
            <person name="Liu J.O."/>
            <person name="Chen L."/>
        </authorList>
    </citation>
    <scope>X-RAY CRYSTALLOGRAPHY (2.2 ANGSTROMS) OF 2-94</scope>
</reference>
<reference key="8">
    <citation type="journal article" date="2005" name="J. Mol. Biol.">
        <title>Mechanism of recruitment of class II histone deacetylases by myocyte enhancer factor-2.</title>
        <authorList>
            <person name="Han A."/>
            <person name="He J."/>
            <person name="Wu Y."/>
            <person name="Liu J.O."/>
            <person name="Chen L."/>
        </authorList>
    </citation>
    <scope>X-RAY CRYSTALLOGRAPHY (2.7 ANGSTROMS) OF 1-93 IN COMPLEX WITH HDAC9 AND DNA</scope>
</reference>
<comment type="function">
    <text>Transcriptional activator which binds specifically to the MEF2 element, 5'-YTA[AT](4)TAR-3', found in numerous muscle-specific genes. Activates transcription via this element. May be involved in muscle-specific and/or growth factor-related transcription.</text>
</comment>
<comment type="subunit">
    <text evidence="1 5">Interacts with HDAC7 (By similarity). Heterodimer. Interacts with HDAC9.</text>
</comment>
<comment type="interaction">
    <interactant intactId="EBI-6427785">
        <id>Q02080</id>
    </interactant>
    <interactant intactId="EBI-2795712">
        <id>Q9Y6J0</id>
        <label>CABIN1</label>
    </interactant>
    <organismsDiffer>false</organismsDiffer>
    <experiments>5</experiments>
</comment>
<comment type="interaction">
    <interactant intactId="EBI-6427785">
        <id>Q02080</id>
    </interactant>
    <interactant intactId="EBI-11953488">
        <id>P56524-2</id>
        <label>HDAC4</label>
    </interactant>
    <organismsDiffer>false</organismsDiffer>
    <experiments>3</experiments>
</comment>
<comment type="interaction">
    <interactant intactId="EBI-6427785">
        <id>Q02080</id>
    </interactant>
    <interactant intactId="EBI-750487">
        <id>Q8WW24</id>
        <label>TEKT4</label>
    </interactant>
    <organismsDiffer>false</organismsDiffer>
    <experiments>3</experiments>
</comment>
<comment type="subcellular location">
    <subcellularLocation>
        <location>Nucleus</location>
    </subcellularLocation>
</comment>
<comment type="alternative products">
    <event type="alternative splicing"/>
    <isoform>
        <id>Q02080-1</id>
        <name>1</name>
        <sequence type="displayed"/>
    </isoform>
    <isoform>
        <id>Q02080-2</id>
        <name>2</name>
        <sequence type="described" ref="VSP_042322"/>
    </isoform>
</comment>
<comment type="tissue specificity">
    <text>Expressed in skeletal and cardiac muscle and brain.</text>
</comment>
<comment type="similarity">
    <text evidence="7">Belongs to the MEF2 family.</text>
</comment>
<keyword id="KW-0002">3D-structure</keyword>
<keyword id="KW-0010">Activator</keyword>
<keyword id="KW-0025">Alternative splicing</keyword>
<keyword id="KW-0238">DNA-binding</keyword>
<keyword id="KW-0539">Nucleus</keyword>
<keyword id="KW-1267">Proteomics identification</keyword>
<keyword id="KW-1185">Reference proteome</keyword>
<keyword id="KW-0804">Transcription</keyword>
<keyword id="KW-0805">Transcription regulation</keyword>
<protein>
    <recommendedName>
        <fullName>Myocyte-specific enhancer factor 2B</fullName>
    </recommendedName>
    <alternativeName>
        <fullName>RSRFR2</fullName>
    </alternativeName>
    <alternativeName>
        <fullName>Serum response factor-like protein 2</fullName>
    </alternativeName>
</protein>
<feature type="chain" id="PRO_0000199431" description="Myocyte-specific enhancer factor 2B">
    <location>
        <begin position="1"/>
        <end position="365"/>
    </location>
</feature>
<feature type="domain" description="MADS-box" evidence="3">
    <location>
        <begin position="3"/>
        <end position="57"/>
    </location>
</feature>
<feature type="DNA-binding region" description="Mef2-type" evidence="2">
    <location>
        <begin position="58"/>
        <end position="86"/>
    </location>
</feature>
<feature type="region of interest" description="Disordered" evidence="4">
    <location>
        <begin position="94"/>
        <end position="124"/>
    </location>
</feature>
<feature type="region of interest" description="Disordered" evidence="4">
    <location>
        <begin position="142"/>
        <end position="309"/>
    </location>
</feature>
<feature type="region of interest" description="Disordered" evidence="4">
    <location>
        <begin position="321"/>
        <end position="365"/>
    </location>
</feature>
<feature type="compositionally biased region" description="Acidic residues" evidence="4">
    <location>
        <begin position="98"/>
        <end position="108"/>
    </location>
</feature>
<feature type="compositionally biased region" description="Polar residues" evidence="4">
    <location>
        <begin position="223"/>
        <end position="240"/>
    </location>
</feature>
<feature type="compositionally biased region" description="Low complexity" evidence="4">
    <location>
        <begin position="277"/>
        <end position="289"/>
    </location>
</feature>
<feature type="compositionally biased region" description="Low complexity" evidence="4">
    <location>
        <begin position="326"/>
        <end position="346"/>
    </location>
</feature>
<feature type="compositionally biased region" description="Polar residues" evidence="4">
    <location>
        <begin position="354"/>
        <end position="365"/>
    </location>
</feature>
<feature type="splice variant" id="VSP_042322" description="In isoform 2." evidence="6">
    <original>VGAEAWARRVPQPAAPPRRPPQSASSLSASLRPPGAPATFLRPSPIPCSSPGPWQSLCGLGPPCAGCPWPTAGPGRRSPGGTSPERSPGTARARGDPTSLQASSEKTQQ</original>
    <variation>EYGLGDPPPPPGLLQPPTLAPWQPSRGDGPPAVSSQPSGGRSLGEEGPPTRGASPPTPPVSIKSERLSPAPGGPGDFPKTFPYPLLLARSLAEPLRPGPALRRLPLADGWPR</variation>
    <location>
        <begin position="257"/>
        <end position="365"/>
    </location>
</feature>
<feature type="sequence conflict" description="In Ref. 3; BAG62689/BAH14699." evidence="7" ref="3">
    <original>K</original>
    <variation>R</variation>
    <location>
        <position position="195"/>
    </location>
</feature>
<feature type="helix" evidence="8">
    <location>
        <begin position="14"/>
        <end position="39"/>
    </location>
</feature>
<feature type="strand" evidence="8">
    <location>
        <begin position="42"/>
        <end position="48"/>
    </location>
</feature>
<feature type="strand" evidence="8">
    <location>
        <begin position="54"/>
        <end position="60"/>
    </location>
</feature>
<feature type="helix" evidence="8">
    <location>
        <begin position="62"/>
        <end position="70"/>
    </location>
</feature>
<feature type="strand" evidence="9">
    <location>
        <begin position="77"/>
        <end position="79"/>
    </location>
</feature>
<feature type="helix" evidence="9">
    <location>
        <begin position="81"/>
        <end position="90"/>
    </location>
</feature>
<sequence>MGRKKIQISRILDQRNRQVTFTKRKFGLMKKAYELSVLCDCEIALIIFNSANRLFQYASTDMDRVLLKYTEYSEPHESRTNTDILETLKRRGIGLDGPELEPDEGPEEPGEKFRRLAGEGGDPALPRPRLYPAAPAMPSPDVVYGALPPPGCDPSGLGEALPAQSRPSPFRPAAPKAGPPGLVHPLFSPSHLTSKTPPPLYLPTEGRRSDLPGGLAGPRGGLNTSRSLYSGLQNPCSTATPGPPLGSFPFLPGGPPVGAEAWARRVPQPAAPPRRPPQSASSLSASLRPPGAPATFLRPSPIPCSSPGPWQSLCGLGPPCAGCPWPTAGPGRRSPGGTSPERSPGTARARGDPTSLQASSEKTQQ</sequence>